<comment type="function">
    <text evidence="1">One of the proteins required for the normal export of preproteins out of the cell cytoplasm. It is a molecular chaperone that binds to a subset of precursor proteins, maintaining them in a translocation-competent state. It also specifically binds to its receptor SecA.</text>
</comment>
<comment type="subunit">
    <text evidence="1">Homotetramer, a dimer of dimers. One homotetramer interacts with 1 SecA dimer.</text>
</comment>
<comment type="subcellular location">
    <subcellularLocation>
        <location evidence="1">Cytoplasm</location>
    </subcellularLocation>
</comment>
<comment type="similarity">
    <text evidence="1">Belongs to the SecB family.</text>
</comment>
<proteinExistence type="inferred from homology"/>
<evidence type="ECO:0000255" key="1">
    <source>
        <dbReference type="HAMAP-Rule" id="MF_00821"/>
    </source>
</evidence>
<name>SECB_ERWT9</name>
<organism>
    <name type="scientific">Erwinia tasmaniensis (strain DSM 17950 / CFBP 7177 / CIP 109463 / NCPPB 4357 / Et1/99)</name>
    <dbReference type="NCBI Taxonomy" id="465817"/>
    <lineage>
        <taxon>Bacteria</taxon>
        <taxon>Pseudomonadati</taxon>
        <taxon>Pseudomonadota</taxon>
        <taxon>Gammaproteobacteria</taxon>
        <taxon>Enterobacterales</taxon>
        <taxon>Erwiniaceae</taxon>
        <taxon>Erwinia</taxon>
    </lineage>
</organism>
<sequence length="153" mass="16912">MSEQNNTEMSFQIQRIYTKDISFEAPNAPQVFQKEWEPEVKLDLDTASSQLADDVYEVVLRVTVTATVGEDSAFLCEVQQAGIFSVGGIDGTQMAHCLGAYCPNILFPYARECITSLVARGTFPQLNLAPVNFDALFMNYLQQSEGAAQQQDA</sequence>
<keyword id="KW-0143">Chaperone</keyword>
<keyword id="KW-0963">Cytoplasm</keyword>
<keyword id="KW-0653">Protein transport</keyword>
<keyword id="KW-1185">Reference proteome</keyword>
<keyword id="KW-0811">Translocation</keyword>
<keyword id="KW-0813">Transport</keyword>
<gene>
    <name evidence="1" type="primary">secB</name>
    <name type="ordered locus">ETA_00900</name>
</gene>
<accession>B2VL52</accession>
<dbReference type="EMBL" id="CU468135">
    <property type="protein sequence ID" value="CAO95136.1"/>
    <property type="molecule type" value="Genomic_DNA"/>
</dbReference>
<dbReference type="RefSeq" id="WP_012439862.1">
    <property type="nucleotide sequence ID" value="NC_010694.1"/>
</dbReference>
<dbReference type="SMR" id="B2VL52"/>
<dbReference type="STRING" id="465817.ETA_00900"/>
<dbReference type="KEGG" id="eta:ETA_00900"/>
<dbReference type="eggNOG" id="COG1952">
    <property type="taxonomic scope" value="Bacteria"/>
</dbReference>
<dbReference type="HOGENOM" id="CLU_111574_1_0_6"/>
<dbReference type="OrthoDB" id="9795145at2"/>
<dbReference type="Proteomes" id="UP000001726">
    <property type="component" value="Chromosome"/>
</dbReference>
<dbReference type="GO" id="GO:0005737">
    <property type="term" value="C:cytoplasm"/>
    <property type="evidence" value="ECO:0007669"/>
    <property type="project" value="UniProtKB-SubCell"/>
</dbReference>
<dbReference type="GO" id="GO:0051082">
    <property type="term" value="F:unfolded protein binding"/>
    <property type="evidence" value="ECO:0007669"/>
    <property type="project" value="InterPro"/>
</dbReference>
<dbReference type="GO" id="GO:0006457">
    <property type="term" value="P:protein folding"/>
    <property type="evidence" value="ECO:0007669"/>
    <property type="project" value="UniProtKB-UniRule"/>
</dbReference>
<dbReference type="GO" id="GO:0051262">
    <property type="term" value="P:protein tetramerization"/>
    <property type="evidence" value="ECO:0007669"/>
    <property type="project" value="InterPro"/>
</dbReference>
<dbReference type="GO" id="GO:0015031">
    <property type="term" value="P:protein transport"/>
    <property type="evidence" value="ECO:0007669"/>
    <property type="project" value="UniProtKB-UniRule"/>
</dbReference>
<dbReference type="CDD" id="cd00557">
    <property type="entry name" value="Translocase_SecB"/>
    <property type="match status" value="1"/>
</dbReference>
<dbReference type="FunFam" id="3.10.420.10:FF:000001">
    <property type="entry name" value="Protein-export chaperone SecB"/>
    <property type="match status" value="1"/>
</dbReference>
<dbReference type="Gene3D" id="3.10.420.10">
    <property type="entry name" value="SecB-like"/>
    <property type="match status" value="1"/>
</dbReference>
<dbReference type="HAMAP" id="MF_00821">
    <property type="entry name" value="SecB"/>
    <property type="match status" value="1"/>
</dbReference>
<dbReference type="InterPro" id="IPR003708">
    <property type="entry name" value="SecB"/>
</dbReference>
<dbReference type="InterPro" id="IPR035958">
    <property type="entry name" value="SecB-like_sf"/>
</dbReference>
<dbReference type="NCBIfam" id="NF004390">
    <property type="entry name" value="PRK05751.1-1"/>
    <property type="match status" value="1"/>
</dbReference>
<dbReference type="NCBIfam" id="NF004393">
    <property type="entry name" value="PRK05751.1-4"/>
    <property type="match status" value="1"/>
</dbReference>
<dbReference type="NCBIfam" id="TIGR00809">
    <property type="entry name" value="secB"/>
    <property type="match status" value="1"/>
</dbReference>
<dbReference type="PANTHER" id="PTHR36918">
    <property type="match status" value="1"/>
</dbReference>
<dbReference type="PANTHER" id="PTHR36918:SF1">
    <property type="entry name" value="PROTEIN-EXPORT PROTEIN SECB"/>
    <property type="match status" value="1"/>
</dbReference>
<dbReference type="Pfam" id="PF02556">
    <property type="entry name" value="SecB"/>
    <property type="match status" value="1"/>
</dbReference>
<dbReference type="PRINTS" id="PR01594">
    <property type="entry name" value="SECBCHAPRONE"/>
</dbReference>
<dbReference type="SUPFAM" id="SSF54611">
    <property type="entry name" value="SecB-like"/>
    <property type="match status" value="1"/>
</dbReference>
<feature type="chain" id="PRO_1000195316" description="Protein-export protein SecB">
    <location>
        <begin position="1"/>
        <end position="153"/>
    </location>
</feature>
<reference key="1">
    <citation type="journal article" date="2008" name="Environ. Microbiol.">
        <title>The genome of Erwinia tasmaniensis strain Et1/99, a non-pathogenic bacterium in the genus Erwinia.</title>
        <authorList>
            <person name="Kube M."/>
            <person name="Migdoll A.M."/>
            <person name="Mueller I."/>
            <person name="Kuhl H."/>
            <person name="Beck A."/>
            <person name="Reinhardt R."/>
            <person name="Geider K."/>
        </authorList>
    </citation>
    <scope>NUCLEOTIDE SEQUENCE [LARGE SCALE GENOMIC DNA]</scope>
    <source>
        <strain>DSM 17950 / CFBP 7177 / CIP 109463 / NCPPB 4357 / Et1/99</strain>
    </source>
</reference>
<protein>
    <recommendedName>
        <fullName evidence="1">Protein-export protein SecB</fullName>
    </recommendedName>
</protein>